<comment type="function">
    <text evidence="1">Component of the cytochrome b6-f complex, which mediates electron transfer between photosystem II (PSII) and photosystem I (PSI), cyclic electron flow around PSI, and state transitions.</text>
</comment>
<comment type="subunit">
    <text evidence="1">The 4 large subunits of the cytochrome b6-f complex are cytochrome b6, subunit IV (17 kDa polypeptide, PetD), cytochrome f and the Rieske protein, while the 4 small subunits are PetG, PetL, PetM and PetN. The complex functions as a dimer.</text>
</comment>
<comment type="subcellular location">
    <subcellularLocation>
        <location evidence="1">Cellular thylakoid membrane</location>
        <topology evidence="1">Single-pass membrane protein</topology>
    </subcellularLocation>
</comment>
<comment type="similarity">
    <text evidence="1">Belongs to the PetM family.</text>
</comment>
<feature type="chain" id="PRO_1000049584" description="Cytochrome b6-f complex subunit 7">
    <location>
        <begin position="1"/>
        <end position="32"/>
    </location>
</feature>
<feature type="transmembrane region" description="Helical" evidence="1">
    <location>
        <begin position="9"/>
        <end position="27"/>
    </location>
</feature>
<keyword id="KW-0249">Electron transport</keyword>
<keyword id="KW-0472">Membrane</keyword>
<keyword id="KW-0602">Photosynthesis</keyword>
<keyword id="KW-1185">Reference proteome</keyword>
<keyword id="KW-0793">Thylakoid</keyword>
<keyword id="KW-0812">Transmembrane</keyword>
<keyword id="KW-1133">Transmembrane helix</keyword>
<keyword id="KW-0813">Transport</keyword>
<proteinExistence type="inferred from homology"/>
<accession>A3PDZ2</accession>
<protein>
    <recommendedName>
        <fullName evidence="1">Cytochrome b6-f complex subunit 7</fullName>
    </recommendedName>
    <alternativeName>
        <fullName evidence="1">Cytochrome b6-f complex subunit PetM</fullName>
    </alternativeName>
    <alternativeName>
        <fullName evidence="1">Cytochrome b6-f complex subunit VII</fullName>
    </alternativeName>
</protein>
<dbReference type="EMBL" id="CP000576">
    <property type="protein sequence ID" value="ABO17967.1"/>
    <property type="molecule type" value="Genomic_DNA"/>
</dbReference>
<dbReference type="RefSeq" id="WP_011863281.1">
    <property type="nucleotide sequence ID" value="NC_009091.1"/>
</dbReference>
<dbReference type="SMR" id="A3PDZ2"/>
<dbReference type="STRING" id="167546.P9301_13441"/>
<dbReference type="KEGG" id="pmg:P9301_13441"/>
<dbReference type="HOGENOM" id="CLU_216743_1_0_3"/>
<dbReference type="OrthoDB" id="541882at2"/>
<dbReference type="Proteomes" id="UP000001430">
    <property type="component" value="Chromosome"/>
</dbReference>
<dbReference type="GO" id="GO:0009512">
    <property type="term" value="C:cytochrome b6f complex"/>
    <property type="evidence" value="ECO:0007669"/>
    <property type="project" value="InterPro"/>
</dbReference>
<dbReference type="GO" id="GO:0031676">
    <property type="term" value="C:plasma membrane-derived thylakoid membrane"/>
    <property type="evidence" value="ECO:0007669"/>
    <property type="project" value="UniProtKB-SubCell"/>
</dbReference>
<dbReference type="GO" id="GO:0009055">
    <property type="term" value="F:electron transfer activity"/>
    <property type="evidence" value="ECO:0007669"/>
    <property type="project" value="UniProtKB-UniRule"/>
</dbReference>
<dbReference type="GO" id="GO:0015979">
    <property type="term" value="P:photosynthesis"/>
    <property type="evidence" value="ECO:0007669"/>
    <property type="project" value="UniProtKB-KW"/>
</dbReference>
<dbReference type="HAMAP" id="MF_00396">
    <property type="entry name" value="Cytb6_f_PetM"/>
    <property type="match status" value="1"/>
</dbReference>
<dbReference type="InterPro" id="IPR012595">
    <property type="entry name" value="PetM_cyt_b6/f_cplx_su7"/>
</dbReference>
<dbReference type="NCBIfam" id="NF008826">
    <property type="entry name" value="PRK11876.1-2"/>
    <property type="match status" value="1"/>
</dbReference>
<dbReference type="Pfam" id="PF08041">
    <property type="entry name" value="PetM"/>
    <property type="match status" value="1"/>
</dbReference>
<organism>
    <name type="scientific">Prochlorococcus marinus (strain MIT 9301)</name>
    <dbReference type="NCBI Taxonomy" id="167546"/>
    <lineage>
        <taxon>Bacteria</taxon>
        <taxon>Bacillati</taxon>
        <taxon>Cyanobacteriota</taxon>
        <taxon>Cyanophyceae</taxon>
        <taxon>Synechococcales</taxon>
        <taxon>Prochlorococcaceae</taxon>
        <taxon>Prochlorococcus</taxon>
    </lineage>
</organism>
<sequence>MAQEIFSIAAVFWILIPIGLVGGALLLKFQGD</sequence>
<reference key="1">
    <citation type="journal article" date="2007" name="PLoS Genet.">
        <title>Patterns and implications of gene gain and loss in the evolution of Prochlorococcus.</title>
        <authorList>
            <person name="Kettler G.C."/>
            <person name="Martiny A.C."/>
            <person name="Huang K."/>
            <person name="Zucker J."/>
            <person name="Coleman M.L."/>
            <person name="Rodrigue S."/>
            <person name="Chen F."/>
            <person name="Lapidus A."/>
            <person name="Ferriera S."/>
            <person name="Johnson J."/>
            <person name="Steglich C."/>
            <person name="Church G.M."/>
            <person name="Richardson P."/>
            <person name="Chisholm S.W."/>
        </authorList>
    </citation>
    <scope>NUCLEOTIDE SEQUENCE [LARGE SCALE GENOMIC DNA]</scope>
    <source>
        <strain>MIT 9301</strain>
    </source>
</reference>
<gene>
    <name evidence="1" type="primary">petM</name>
    <name type="ordered locus">P9301_13441</name>
</gene>
<evidence type="ECO:0000255" key="1">
    <source>
        <dbReference type="HAMAP-Rule" id="MF_00396"/>
    </source>
</evidence>
<name>PETM_PROM0</name>